<keyword id="KW-0029">Amino-acid transport</keyword>
<keyword id="KW-0997">Cell inner membrane</keyword>
<keyword id="KW-1003">Cell membrane</keyword>
<keyword id="KW-0472">Membrane</keyword>
<keyword id="KW-1185">Reference proteome</keyword>
<keyword id="KW-0769">Symport</keyword>
<keyword id="KW-0812">Transmembrane</keyword>
<keyword id="KW-1133">Transmembrane helix</keyword>
<keyword id="KW-0813">Transport</keyword>
<organism>
    <name type="scientific">Laribacter hongkongensis (strain HLHK9)</name>
    <dbReference type="NCBI Taxonomy" id="557598"/>
    <lineage>
        <taxon>Bacteria</taxon>
        <taxon>Pseudomonadati</taxon>
        <taxon>Pseudomonadota</taxon>
        <taxon>Betaproteobacteria</taxon>
        <taxon>Neisseriales</taxon>
        <taxon>Aquaspirillaceae</taxon>
        <taxon>Laribacter</taxon>
    </lineage>
</organism>
<gene>
    <name evidence="1" type="primary">sstT</name>
    <name type="ordered locus">LHK_03032</name>
</gene>
<feature type="chain" id="PRO_1000185654" description="Serine/threonine transporter SstT">
    <location>
        <begin position="1"/>
        <end position="416"/>
    </location>
</feature>
<feature type="transmembrane region" description="Helical" evidence="1">
    <location>
        <begin position="14"/>
        <end position="34"/>
    </location>
</feature>
<feature type="transmembrane region" description="Helical" evidence="1">
    <location>
        <begin position="43"/>
        <end position="63"/>
    </location>
</feature>
<feature type="transmembrane region" description="Helical" evidence="1">
    <location>
        <begin position="82"/>
        <end position="102"/>
    </location>
</feature>
<feature type="transmembrane region" description="Helical" evidence="1">
    <location>
        <begin position="141"/>
        <end position="161"/>
    </location>
</feature>
<feature type="transmembrane region" description="Helical" evidence="1">
    <location>
        <begin position="192"/>
        <end position="212"/>
    </location>
</feature>
<feature type="transmembrane region" description="Helical" evidence="1">
    <location>
        <begin position="220"/>
        <end position="240"/>
    </location>
</feature>
<feature type="transmembrane region" description="Helical" evidence="1">
    <location>
        <begin position="298"/>
        <end position="318"/>
    </location>
</feature>
<feature type="transmembrane region" description="Helical" evidence="1">
    <location>
        <begin position="339"/>
        <end position="359"/>
    </location>
</feature>
<feature type="transmembrane region" description="Helical" evidence="1">
    <location>
        <begin position="363"/>
        <end position="383"/>
    </location>
</feature>
<protein>
    <recommendedName>
        <fullName evidence="1">Serine/threonine transporter SstT</fullName>
    </recommendedName>
    <alternativeName>
        <fullName evidence="1">Na(+)/serine-threonine symporter</fullName>
    </alternativeName>
</protein>
<dbReference type="EMBL" id="CP001154">
    <property type="protein sequence ID" value="ACO76010.1"/>
    <property type="molecule type" value="Genomic_DNA"/>
</dbReference>
<dbReference type="RefSeq" id="WP_012698473.1">
    <property type="nucleotide sequence ID" value="NC_012559.1"/>
</dbReference>
<dbReference type="SMR" id="C1D5J3"/>
<dbReference type="STRING" id="557598.LHK_03032"/>
<dbReference type="KEGG" id="lhk:LHK_03032"/>
<dbReference type="eggNOG" id="COG3633">
    <property type="taxonomic scope" value="Bacteria"/>
</dbReference>
<dbReference type="HOGENOM" id="CLU_044581_0_0_4"/>
<dbReference type="Proteomes" id="UP000002010">
    <property type="component" value="Chromosome"/>
</dbReference>
<dbReference type="GO" id="GO:0005886">
    <property type="term" value="C:plasma membrane"/>
    <property type="evidence" value="ECO:0007669"/>
    <property type="project" value="UniProtKB-SubCell"/>
</dbReference>
<dbReference type="GO" id="GO:0005295">
    <property type="term" value="F:neutral L-amino acid:sodium symporter activity"/>
    <property type="evidence" value="ECO:0007669"/>
    <property type="project" value="TreeGrafter"/>
</dbReference>
<dbReference type="GO" id="GO:0032329">
    <property type="term" value="P:serine transport"/>
    <property type="evidence" value="ECO:0007669"/>
    <property type="project" value="InterPro"/>
</dbReference>
<dbReference type="GO" id="GO:0015826">
    <property type="term" value="P:threonine transport"/>
    <property type="evidence" value="ECO:0007669"/>
    <property type="project" value="InterPro"/>
</dbReference>
<dbReference type="FunFam" id="1.10.3860.10:FF:000003">
    <property type="entry name" value="Serine/threonine transporter sstT"/>
    <property type="match status" value="1"/>
</dbReference>
<dbReference type="Gene3D" id="1.10.3860.10">
    <property type="entry name" value="Sodium:dicarboxylate symporter"/>
    <property type="match status" value="1"/>
</dbReference>
<dbReference type="HAMAP" id="MF_01582">
    <property type="entry name" value="Ser_Thr_transp_SstT"/>
    <property type="match status" value="1"/>
</dbReference>
<dbReference type="InterPro" id="IPR001991">
    <property type="entry name" value="Na-dicarboxylate_symporter"/>
</dbReference>
<dbReference type="InterPro" id="IPR036458">
    <property type="entry name" value="Na:dicarbo_symporter_sf"/>
</dbReference>
<dbReference type="InterPro" id="IPR023025">
    <property type="entry name" value="Ser_Thr_transp_SstT"/>
</dbReference>
<dbReference type="NCBIfam" id="NF010151">
    <property type="entry name" value="PRK13628.1"/>
    <property type="match status" value="1"/>
</dbReference>
<dbReference type="PANTHER" id="PTHR42865">
    <property type="entry name" value="PROTON/GLUTAMATE-ASPARTATE SYMPORTER"/>
    <property type="match status" value="1"/>
</dbReference>
<dbReference type="PANTHER" id="PTHR42865:SF8">
    <property type="entry name" value="SERINE_THREONINE TRANSPORTER SSTT"/>
    <property type="match status" value="1"/>
</dbReference>
<dbReference type="Pfam" id="PF00375">
    <property type="entry name" value="SDF"/>
    <property type="match status" value="1"/>
</dbReference>
<dbReference type="PRINTS" id="PR00173">
    <property type="entry name" value="EDTRNSPORT"/>
</dbReference>
<dbReference type="SUPFAM" id="SSF118215">
    <property type="entry name" value="Proton glutamate symport protein"/>
    <property type="match status" value="1"/>
</dbReference>
<sequence length="416" mass="42816">MQLLPFLLYRLRHGSIVLQIMFGLVAGMALALLSPEAAKSVAFLGTLFVKALKGVAPVLVFVLVATSIAGKTKGVQTNMRPVLVLYLVGTFLAALVGVVASFLSPVRLVLANAATGSVPPGGIGEVLHTLLFQVVDNPVNALATGNFIGILAWAAALGVALHHSSDTTKAMLYDLSQSISNVVKVIIRFAPIGVFGLVADAIATTGFSALMGYSHLLAVLLGSMLFIALVVNPLIVFLAIRRNPYPLVWTCLRESGVTAFFTRSSAANIPVNMNLCRKLGLHEDTYSVSIPLGATINMAGAAITISVLSLAAVHTLGVEVDLPTALLLSLVASVAACGASGVAGGSLLLIPLACSLFGISNDVAMQMVAVGFIIGVIQDSAETALNSSTDVLFTAAACIANGDVDVPAGELVKTDA</sequence>
<evidence type="ECO:0000255" key="1">
    <source>
        <dbReference type="HAMAP-Rule" id="MF_01582"/>
    </source>
</evidence>
<reference key="1">
    <citation type="journal article" date="2009" name="PLoS Genet.">
        <title>The complete genome and proteome of Laribacter hongkongensis reveal potential mechanisms for adaptations to different temperatures and habitats.</title>
        <authorList>
            <person name="Woo P.C.Y."/>
            <person name="Lau S.K.P."/>
            <person name="Tse H."/>
            <person name="Teng J.L.L."/>
            <person name="Curreem S.O."/>
            <person name="Tsang A.K.L."/>
            <person name="Fan R.Y.Y."/>
            <person name="Wong G.K.M."/>
            <person name="Huang Y."/>
            <person name="Loman N.J."/>
            <person name="Snyder L.A.S."/>
            <person name="Cai J.J."/>
            <person name="Huang J.-D."/>
            <person name="Mak W."/>
            <person name="Pallen M.J."/>
            <person name="Lok S."/>
            <person name="Yuen K.-Y."/>
        </authorList>
    </citation>
    <scope>NUCLEOTIDE SEQUENCE [LARGE SCALE GENOMIC DNA]</scope>
    <source>
        <strain>HLHK9</strain>
    </source>
</reference>
<proteinExistence type="inferred from homology"/>
<name>SSTT_LARHH</name>
<accession>C1D5J3</accession>
<comment type="function">
    <text evidence="1">Involved in the import of serine and threonine into the cell, with the concomitant import of sodium (symport system).</text>
</comment>
<comment type="catalytic activity">
    <reaction evidence="1">
        <text>L-serine(in) + Na(+)(in) = L-serine(out) + Na(+)(out)</text>
        <dbReference type="Rhea" id="RHEA:29575"/>
        <dbReference type="ChEBI" id="CHEBI:29101"/>
        <dbReference type="ChEBI" id="CHEBI:33384"/>
    </reaction>
    <physiologicalReaction direction="right-to-left" evidence="1">
        <dbReference type="Rhea" id="RHEA:29577"/>
    </physiologicalReaction>
</comment>
<comment type="catalytic activity">
    <reaction evidence="1">
        <text>L-threonine(in) + Na(+)(in) = L-threonine(out) + Na(+)(out)</text>
        <dbReference type="Rhea" id="RHEA:69999"/>
        <dbReference type="ChEBI" id="CHEBI:29101"/>
        <dbReference type="ChEBI" id="CHEBI:57926"/>
    </reaction>
    <physiologicalReaction direction="right-to-left" evidence="1">
        <dbReference type="Rhea" id="RHEA:70001"/>
    </physiologicalReaction>
</comment>
<comment type="subcellular location">
    <subcellularLocation>
        <location evidence="1">Cell inner membrane</location>
        <topology evidence="1">Multi-pass membrane protein</topology>
    </subcellularLocation>
</comment>
<comment type="similarity">
    <text evidence="1">Belongs to the dicarboxylate/amino acid:cation symporter (DAACS) (TC 2.A.23) family.</text>
</comment>